<evidence type="ECO:0000255" key="1">
    <source>
        <dbReference type="HAMAP-Rule" id="MF_00160"/>
    </source>
</evidence>
<name>SERC_ECO27</name>
<protein>
    <recommendedName>
        <fullName evidence="1">Phosphoserine aminotransferase</fullName>
        <ecNumber evidence="1">2.6.1.52</ecNumber>
    </recommendedName>
    <alternativeName>
        <fullName evidence="1">Phosphohydroxythreonine aminotransferase</fullName>
        <shortName evidence="1">PSAT</shortName>
    </alternativeName>
</protein>
<comment type="function">
    <text evidence="1">Catalyzes the reversible conversion of 3-phosphohydroxypyruvate to phosphoserine and of 3-hydroxy-2-oxo-4-phosphonooxybutanoate to phosphohydroxythreonine.</text>
</comment>
<comment type="catalytic activity">
    <reaction evidence="1">
        <text>O-phospho-L-serine + 2-oxoglutarate = 3-phosphooxypyruvate + L-glutamate</text>
        <dbReference type="Rhea" id="RHEA:14329"/>
        <dbReference type="ChEBI" id="CHEBI:16810"/>
        <dbReference type="ChEBI" id="CHEBI:18110"/>
        <dbReference type="ChEBI" id="CHEBI:29985"/>
        <dbReference type="ChEBI" id="CHEBI:57524"/>
        <dbReference type="EC" id="2.6.1.52"/>
    </reaction>
</comment>
<comment type="catalytic activity">
    <reaction evidence="1">
        <text>4-(phosphooxy)-L-threonine + 2-oxoglutarate = (R)-3-hydroxy-2-oxo-4-phosphooxybutanoate + L-glutamate</text>
        <dbReference type="Rhea" id="RHEA:16573"/>
        <dbReference type="ChEBI" id="CHEBI:16810"/>
        <dbReference type="ChEBI" id="CHEBI:29985"/>
        <dbReference type="ChEBI" id="CHEBI:58452"/>
        <dbReference type="ChEBI" id="CHEBI:58538"/>
        <dbReference type="EC" id="2.6.1.52"/>
    </reaction>
</comment>
<comment type="cofactor">
    <cofactor evidence="1">
        <name>pyridoxal 5'-phosphate</name>
        <dbReference type="ChEBI" id="CHEBI:597326"/>
    </cofactor>
    <text evidence="1">Binds 1 pyridoxal phosphate per subunit.</text>
</comment>
<comment type="pathway">
    <text evidence="1">Amino-acid biosynthesis; L-serine biosynthesis; L-serine from 3-phospho-D-glycerate: step 2/3.</text>
</comment>
<comment type="pathway">
    <text evidence="1">Cofactor biosynthesis; pyridoxine 5'-phosphate biosynthesis; pyridoxine 5'-phosphate from D-erythrose 4-phosphate: step 3/5.</text>
</comment>
<comment type="subunit">
    <text evidence="1">Homodimer.</text>
</comment>
<comment type="subcellular location">
    <subcellularLocation>
        <location evidence="1">Cytoplasm</location>
    </subcellularLocation>
</comment>
<comment type="similarity">
    <text evidence="1">Belongs to the class-V pyridoxal-phosphate-dependent aminotransferase family. SerC subfamily.</text>
</comment>
<gene>
    <name evidence="1" type="primary">serC</name>
    <name type="ordered locus">E2348C_0900</name>
</gene>
<proteinExistence type="inferred from homology"/>
<dbReference type="EC" id="2.6.1.52" evidence="1"/>
<dbReference type="EMBL" id="FM180568">
    <property type="protein sequence ID" value="CAS08448.1"/>
    <property type="molecule type" value="Genomic_DNA"/>
</dbReference>
<dbReference type="RefSeq" id="WP_000057135.1">
    <property type="nucleotide sequence ID" value="NC_011601.1"/>
</dbReference>
<dbReference type="SMR" id="B7UMZ3"/>
<dbReference type="KEGG" id="ecg:E2348C_0900"/>
<dbReference type="HOGENOM" id="CLU_034866_0_2_6"/>
<dbReference type="UniPathway" id="UPA00135">
    <property type="reaction ID" value="UER00197"/>
</dbReference>
<dbReference type="UniPathway" id="UPA00244">
    <property type="reaction ID" value="UER00311"/>
</dbReference>
<dbReference type="Proteomes" id="UP000008205">
    <property type="component" value="Chromosome"/>
</dbReference>
<dbReference type="GO" id="GO:0005737">
    <property type="term" value="C:cytoplasm"/>
    <property type="evidence" value="ECO:0007669"/>
    <property type="project" value="UniProtKB-SubCell"/>
</dbReference>
<dbReference type="GO" id="GO:0004648">
    <property type="term" value="F:O-phospho-L-serine:2-oxoglutarate aminotransferase activity"/>
    <property type="evidence" value="ECO:0007669"/>
    <property type="project" value="UniProtKB-UniRule"/>
</dbReference>
<dbReference type="GO" id="GO:0030170">
    <property type="term" value="F:pyridoxal phosphate binding"/>
    <property type="evidence" value="ECO:0007669"/>
    <property type="project" value="UniProtKB-UniRule"/>
</dbReference>
<dbReference type="GO" id="GO:0006564">
    <property type="term" value="P:L-serine biosynthetic process"/>
    <property type="evidence" value="ECO:0007669"/>
    <property type="project" value="UniProtKB-UniRule"/>
</dbReference>
<dbReference type="GO" id="GO:0008615">
    <property type="term" value="P:pyridoxine biosynthetic process"/>
    <property type="evidence" value="ECO:0007669"/>
    <property type="project" value="UniProtKB-UniRule"/>
</dbReference>
<dbReference type="CDD" id="cd00611">
    <property type="entry name" value="PSAT_like"/>
    <property type="match status" value="1"/>
</dbReference>
<dbReference type="FunFam" id="3.40.640.10:FF:000010">
    <property type="entry name" value="Phosphoserine aminotransferase"/>
    <property type="match status" value="1"/>
</dbReference>
<dbReference type="FunFam" id="3.90.1150.10:FF:000006">
    <property type="entry name" value="Phosphoserine aminotransferase"/>
    <property type="match status" value="1"/>
</dbReference>
<dbReference type="Gene3D" id="3.90.1150.10">
    <property type="entry name" value="Aspartate Aminotransferase, domain 1"/>
    <property type="match status" value="1"/>
</dbReference>
<dbReference type="Gene3D" id="3.40.640.10">
    <property type="entry name" value="Type I PLP-dependent aspartate aminotransferase-like (Major domain)"/>
    <property type="match status" value="1"/>
</dbReference>
<dbReference type="HAMAP" id="MF_00160">
    <property type="entry name" value="SerC_aminotrans_5"/>
    <property type="match status" value="1"/>
</dbReference>
<dbReference type="InterPro" id="IPR000192">
    <property type="entry name" value="Aminotrans_V_dom"/>
</dbReference>
<dbReference type="InterPro" id="IPR020578">
    <property type="entry name" value="Aminotrans_V_PyrdxlP_BS"/>
</dbReference>
<dbReference type="InterPro" id="IPR022278">
    <property type="entry name" value="Pser_aminoTfrase"/>
</dbReference>
<dbReference type="InterPro" id="IPR015424">
    <property type="entry name" value="PyrdxlP-dep_Trfase"/>
</dbReference>
<dbReference type="InterPro" id="IPR015421">
    <property type="entry name" value="PyrdxlP-dep_Trfase_major"/>
</dbReference>
<dbReference type="InterPro" id="IPR015422">
    <property type="entry name" value="PyrdxlP-dep_Trfase_small"/>
</dbReference>
<dbReference type="NCBIfam" id="NF003764">
    <property type="entry name" value="PRK05355.1"/>
    <property type="match status" value="1"/>
</dbReference>
<dbReference type="NCBIfam" id="TIGR01364">
    <property type="entry name" value="serC_1"/>
    <property type="match status" value="1"/>
</dbReference>
<dbReference type="PANTHER" id="PTHR43247">
    <property type="entry name" value="PHOSPHOSERINE AMINOTRANSFERASE"/>
    <property type="match status" value="1"/>
</dbReference>
<dbReference type="PANTHER" id="PTHR43247:SF1">
    <property type="entry name" value="PHOSPHOSERINE AMINOTRANSFERASE"/>
    <property type="match status" value="1"/>
</dbReference>
<dbReference type="Pfam" id="PF00266">
    <property type="entry name" value="Aminotran_5"/>
    <property type="match status" value="1"/>
</dbReference>
<dbReference type="PIRSF" id="PIRSF000525">
    <property type="entry name" value="SerC"/>
    <property type="match status" value="1"/>
</dbReference>
<dbReference type="SUPFAM" id="SSF53383">
    <property type="entry name" value="PLP-dependent transferases"/>
    <property type="match status" value="1"/>
</dbReference>
<dbReference type="PROSITE" id="PS00595">
    <property type="entry name" value="AA_TRANSFER_CLASS_5"/>
    <property type="match status" value="1"/>
</dbReference>
<accession>B7UMZ3</accession>
<feature type="chain" id="PRO_1000203519" description="Phosphoserine aminotransferase">
    <location>
        <begin position="1"/>
        <end position="362"/>
    </location>
</feature>
<feature type="binding site" evidence="1">
    <location>
        <position position="9"/>
    </location>
    <ligand>
        <name>L-glutamate</name>
        <dbReference type="ChEBI" id="CHEBI:29985"/>
    </ligand>
</feature>
<feature type="binding site" evidence="1">
    <location>
        <position position="42"/>
    </location>
    <ligand>
        <name>L-glutamate</name>
        <dbReference type="ChEBI" id="CHEBI:29985"/>
    </ligand>
</feature>
<feature type="binding site" evidence="1">
    <location>
        <begin position="76"/>
        <end position="77"/>
    </location>
    <ligand>
        <name>pyridoxal 5'-phosphate</name>
        <dbReference type="ChEBI" id="CHEBI:597326"/>
    </ligand>
</feature>
<feature type="binding site" evidence="1">
    <location>
        <position position="102"/>
    </location>
    <ligand>
        <name>pyridoxal 5'-phosphate</name>
        <dbReference type="ChEBI" id="CHEBI:597326"/>
    </ligand>
</feature>
<feature type="binding site" evidence="1">
    <location>
        <position position="153"/>
    </location>
    <ligand>
        <name>pyridoxal 5'-phosphate</name>
        <dbReference type="ChEBI" id="CHEBI:597326"/>
    </ligand>
</feature>
<feature type="binding site" evidence="1">
    <location>
        <position position="174"/>
    </location>
    <ligand>
        <name>pyridoxal 5'-phosphate</name>
        <dbReference type="ChEBI" id="CHEBI:597326"/>
    </ligand>
</feature>
<feature type="binding site" evidence="1">
    <location>
        <position position="197"/>
    </location>
    <ligand>
        <name>pyridoxal 5'-phosphate</name>
        <dbReference type="ChEBI" id="CHEBI:597326"/>
    </ligand>
</feature>
<feature type="binding site" evidence="1">
    <location>
        <begin position="239"/>
        <end position="240"/>
    </location>
    <ligand>
        <name>pyridoxal 5'-phosphate</name>
        <dbReference type="ChEBI" id="CHEBI:597326"/>
    </ligand>
</feature>
<feature type="modified residue" description="N6-(pyridoxal phosphate)lysine" evidence="1">
    <location>
        <position position="198"/>
    </location>
</feature>
<reference key="1">
    <citation type="journal article" date="2009" name="J. Bacteriol.">
        <title>Complete genome sequence and comparative genome analysis of enteropathogenic Escherichia coli O127:H6 strain E2348/69.</title>
        <authorList>
            <person name="Iguchi A."/>
            <person name="Thomson N.R."/>
            <person name="Ogura Y."/>
            <person name="Saunders D."/>
            <person name="Ooka T."/>
            <person name="Henderson I.R."/>
            <person name="Harris D."/>
            <person name="Asadulghani M."/>
            <person name="Kurokawa K."/>
            <person name="Dean P."/>
            <person name="Kenny B."/>
            <person name="Quail M.A."/>
            <person name="Thurston S."/>
            <person name="Dougan G."/>
            <person name="Hayashi T."/>
            <person name="Parkhill J."/>
            <person name="Frankel G."/>
        </authorList>
    </citation>
    <scope>NUCLEOTIDE SEQUENCE [LARGE SCALE GENOMIC DNA]</scope>
    <source>
        <strain>E2348/69 / EPEC</strain>
    </source>
</reference>
<sequence length="362" mass="39832">MAQIFNFSSGPAMLPAEVLKQAQQELRDWNGLGTSVMEVSHRGKEFIQVAEEAEKDFRDLLNVPSNYKVLFCHGGGRGQFAAVPLNILGDKTTADYVDAGYWAASAIKEAKKYCTPNVFDAKVTVDGFRAVKPMSEWQLSDNAAYMHYCPNETIDGIAIDETPNFGKDVVVAADFSSTILSRPIDVSRYGVIYAGAQKNIGPAGLTIVIVREDLLGKANIACPSILDYSILNDNDSMFNTPPTFAWYLSGLVFKWLKANGGVVAMDKINQQKAELLYGVIDNSDFYRNDVAKANRSRMNVPFQLADSALDKLFLEESFAAGLHALKGHRVVGGMRASIYNAMPLEGVKALTDFMVEFERRHG</sequence>
<organism>
    <name type="scientific">Escherichia coli O127:H6 (strain E2348/69 / EPEC)</name>
    <dbReference type="NCBI Taxonomy" id="574521"/>
    <lineage>
        <taxon>Bacteria</taxon>
        <taxon>Pseudomonadati</taxon>
        <taxon>Pseudomonadota</taxon>
        <taxon>Gammaproteobacteria</taxon>
        <taxon>Enterobacterales</taxon>
        <taxon>Enterobacteriaceae</taxon>
        <taxon>Escherichia</taxon>
    </lineage>
</organism>
<keyword id="KW-0028">Amino-acid biosynthesis</keyword>
<keyword id="KW-0032">Aminotransferase</keyword>
<keyword id="KW-0963">Cytoplasm</keyword>
<keyword id="KW-0663">Pyridoxal phosphate</keyword>
<keyword id="KW-0664">Pyridoxine biosynthesis</keyword>
<keyword id="KW-1185">Reference proteome</keyword>
<keyword id="KW-0718">Serine biosynthesis</keyword>
<keyword id="KW-0808">Transferase</keyword>